<feature type="chain" id="PRO_0000115527" description="Small ribosomal subunit protein uS15">
    <location>
        <begin position="1"/>
        <end position="91"/>
    </location>
</feature>
<keyword id="KW-1185">Reference proteome</keyword>
<keyword id="KW-0687">Ribonucleoprotein</keyword>
<keyword id="KW-0689">Ribosomal protein</keyword>
<keyword id="KW-0694">RNA-binding</keyword>
<keyword id="KW-0699">rRNA-binding</keyword>
<evidence type="ECO:0000255" key="1">
    <source>
        <dbReference type="HAMAP-Rule" id="MF_01343"/>
    </source>
</evidence>
<evidence type="ECO:0000305" key="2"/>
<sequence>MSITTERKQQLIKEYAITENDTGSTAVQCAILTERINNLTEHFKSNHKDHTSRRGLLILVGRRRRLLNYIKKNNVSEYLDLISKLGIRKIK</sequence>
<name>RS15_RICPR</name>
<accession>Q9ZD44</accession>
<dbReference type="EMBL" id="AJ235272">
    <property type="protein sequence ID" value="CAA14955.1"/>
    <property type="molecule type" value="Genomic_DNA"/>
</dbReference>
<dbReference type="PIR" id="A71654">
    <property type="entry name" value="A71654"/>
</dbReference>
<dbReference type="RefSeq" id="NP_220879.1">
    <property type="nucleotide sequence ID" value="NC_000963.1"/>
</dbReference>
<dbReference type="RefSeq" id="WP_004597748.1">
    <property type="nucleotide sequence ID" value="NC_000963.1"/>
</dbReference>
<dbReference type="SMR" id="Q9ZD44"/>
<dbReference type="STRING" id="272947.gene:17555583"/>
<dbReference type="EnsemblBacteria" id="CAA14955">
    <property type="protein sequence ID" value="CAA14955"/>
    <property type="gene ID" value="CAA14955"/>
</dbReference>
<dbReference type="GeneID" id="57569625"/>
<dbReference type="KEGG" id="rpr:RP503"/>
<dbReference type="PATRIC" id="fig|272947.5.peg.512"/>
<dbReference type="eggNOG" id="COG0184">
    <property type="taxonomic scope" value="Bacteria"/>
</dbReference>
<dbReference type="HOGENOM" id="CLU_148518_0_0_5"/>
<dbReference type="OrthoDB" id="9799262at2"/>
<dbReference type="Proteomes" id="UP000002480">
    <property type="component" value="Chromosome"/>
</dbReference>
<dbReference type="GO" id="GO:0022627">
    <property type="term" value="C:cytosolic small ribosomal subunit"/>
    <property type="evidence" value="ECO:0007669"/>
    <property type="project" value="TreeGrafter"/>
</dbReference>
<dbReference type="GO" id="GO:0019843">
    <property type="term" value="F:rRNA binding"/>
    <property type="evidence" value="ECO:0007669"/>
    <property type="project" value="UniProtKB-UniRule"/>
</dbReference>
<dbReference type="GO" id="GO:0003735">
    <property type="term" value="F:structural constituent of ribosome"/>
    <property type="evidence" value="ECO:0007669"/>
    <property type="project" value="InterPro"/>
</dbReference>
<dbReference type="GO" id="GO:0006412">
    <property type="term" value="P:translation"/>
    <property type="evidence" value="ECO:0007669"/>
    <property type="project" value="UniProtKB-UniRule"/>
</dbReference>
<dbReference type="CDD" id="cd00353">
    <property type="entry name" value="Ribosomal_S15p_S13e"/>
    <property type="match status" value="1"/>
</dbReference>
<dbReference type="FunFam" id="1.10.287.10:FF:000002">
    <property type="entry name" value="30S ribosomal protein S15"/>
    <property type="match status" value="1"/>
</dbReference>
<dbReference type="Gene3D" id="6.10.250.3130">
    <property type="match status" value="1"/>
</dbReference>
<dbReference type="Gene3D" id="1.10.287.10">
    <property type="entry name" value="S15/NS1, RNA-binding"/>
    <property type="match status" value="1"/>
</dbReference>
<dbReference type="HAMAP" id="MF_01343_B">
    <property type="entry name" value="Ribosomal_uS15_B"/>
    <property type="match status" value="1"/>
</dbReference>
<dbReference type="InterPro" id="IPR000589">
    <property type="entry name" value="Ribosomal_uS15"/>
</dbReference>
<dbReference type="InterPro" id="IPR005290">
    <property type="entry name" value="Ribosomal_uS15_bac-type"/>
</dbReference>
<dbReference type="InterPro" id="IPR009068">
    <property type="entry name" value="uS15_NS1_RNA-bd_sf"/>
</dbReference>
<dbReference type="NCBIfam" id="TIGR00952">
    <property type="entry name" value="S15_bact"/>
    <property type="match status" value="1"/>
</dbReference>
<dbReference type="PANTHER" id="PTHR23321">
    <property type="entry name" value="RIBOSOMAL PROTEIN S15, BACTERIAL AND ORGANELLAR"/>
    <property type="match status" value="1"/>
</dbReference>
<dbReference type="PANTHER" id="PTHR23321:SF26">
    <property type="entry name" value="SMALL RIBOSOMAL SUBUNIT PROTEIN US15M"/>
    <property type="match status" value="1"/>
</dbReference>
<dbReference type="Pfam" id="PF00312">
    <property type="entry name" value="Ribosomal_S15"/>
    <property type="match status" value="1"/>
</dbReference>
<dbReference type="SMART" id="SM01387">
    <property type="entry name" value="Ribosomal_S15"/>
    <property type="match status" value="1"/>
</dbReference>
<dbReference type="SUPFAM" id="SSF47060">
    <property type="entry name" value="S15/NS1 RNA-binding domain"/>
    <property type="match status" value="1"/>
</dbReference>
<dbReference type="PROSITE" id="PS00362">
    <property type="entry name" value="RIBOSOMAL_S15"/>
    <property type="match status" value="1"/>
</dbReference>
<protein>
    <recommendedName>
        <fullName evidence="1">Small ribosomal subunit protein uS15</fullName>
    </recommendedName>
    <alternativeName>
        <fullName evidence="2">30S ribosomal protein S15</fullName>
    </alternativeName>
</protein>
<comment type="function">
    <text evidence="1">One of the primary rRNA binding proteins, it binds directly to 16S rRNA where it helps nucleate assembly of the platform of the 30S subunit by binding and bridging several RNA helices of the 16S rRNA.</text>
</comment>
<comment type="function">
    <text evidence="1">Forms an intersubunit bridge (bridge B4) with the 23S rRNA of the 50S subunit in the ribosome.</text>
</comment>
<comment type="subunit">
    <text evidence="1">Part of the 30S ribosomal subunit. Forms a bridge to the 50S subunit in the 70S ribosome, contacting the 23S rRNA.</text>
</comment>
<comment type="similarity">
    <text evidence="1">Belongs to the universal ribosomal protein uS15 family.</text>
</comment>
<gene>
    <name evidence="1" type="primary">rpsO</name>
    <name type="ordered locus">RP503</name>
</gene>
<proteinExistence type="inferred from homology"/>
<reference key="1">
    <citation type="journal article" date="1998" name="Nature">
        <title>The genome sequence of Rickettsia prowazekii and the origin of mitochondria.</title>
        <authorList>
            <person name="Andersson S.G.E."/>
            <person name="Zomorodipour A."/>
            <person name="Andersson J.O."/>
            <person name="Sicheritz-Ponten T."/>
            <person name="Alsmark U.C.M."/>
            <person name="Podowski R.M."/>
            <person name="Naeslund A.K."/>
            <person name="Eriksson A.-S."/>
            <person name="Winkler H.H."/>
            <person name="Kurland C.G."/>
        </authorList>
    </citation>
    <scope>NUCLEOTIDE SEQUENCE [LARGE SCALE GENOMIC DNA]</scope>
    <source>
        <strain>Madrid E</strain>
    </source>
</reference>
<organism>
    <name type="scientific">Rickettsia prowazekii (strain Madrid E)</name>
    <dbReference type="NCBI Taxonomy" id="272947"/>
    <lineage>
        <taxon>Bacteria</taxon>
        <taxon>Pseudomonadati</taxon>
        <taxon>Pseudomonadota</taxon>
        <taxon>Alphaproteobacteria</taxon>
        <taxon>Rickettsiales</taxon>
        <taxon>Rickettsiaceae</taxon>
        <taxon>Rickettsieae</taxon>
        <taxon>Rickettsia</taxon>
        <taxon>typhus group</taxon>
    </lineage>
</organism>